<dbReference type="EC" id="6.4.1.3" evidence="2"/>
<dbReference type="EMBL" id="AF327060">
    <property type="protein sequence ID" value="AAK28525.1"/>
    <property type="molecule type" value="mRNA"/>
</dbReference>
<dbReference type="EMBL" id="AK004976">
    <property type="protein sequence ID" value="BAB23712.1"/>
    <property type="molecule type" value="mRNA"/>
</dbReference>
<dbReference type="EMBL" id="AK050366">
    <property type="protein sequence ID" value="BAC34211.1"/>
    <property type="molecule type" value="mRNA"/>
</dbReference>
<dbReference type="CCDS" id="CCDS23442.1"/>
<dbReference type="RefSeq" id="NP_001298078.1">
    <property type="nucleotide sequence ID" value="NM_001311149.1"/>
</dbReference>
<dbReference type="RefSeq" id="NP_080111.1">
    <property type="nucleotide sequence ID" value="NM_025835.3"/>
</dbReference>
<dbReference type="SMR" id="Q99MN9"/>
<dbReference type="BioGRID" id="211800">
    <property type="interactions" value="10"/>
</dbReference>
<dbReference type="FunCoup" id="Q99MN9">
    <property type="interactions" value="1279"/>
</dbReference>
<dbReference type="IntAct" id="Q99MN9">
    <property type="interactions" value="2"/>
</dbReference>
<dbReference type="MINT" id="Q99MN9"/>
<dbReference type="STRING" id="10090.ENSMUSP00000035116"/>
<dbReference type="GlyGen" id="Q99MN9">
    <property type="glycosylation" value="2 sites, 1 N-linked glycan (1 site), 1 O-linked glycan (1 site)"/>
</dbReference>
<dbReference type="iPTMnet" id="Q99MN9"/>
<dbReference type="PhosphoSitePlus" id="Q99MN9"/>
<dbReference type="SwissPalm" id="Q99MN9"/>
<dbReference type="REPRODUCTION-2DPAGE" id="Q99MN9"/>
<dbReference type="jPOST" id="Q99MN9"/>
<dbReference type="PaxDb" id="10090-ENSMUSP00000035116"/>
<dbReference type="PeptideAtlas" id="Q99MN9"/>
<dbReference type="ProteomicsDB" id="287964"/>
<dbReference type="Pumba" id="Q99MN9"/>
<dbReference type="Antibodypedia" id="33408">
    <property type="antibodies" value="211 antibodies from 31 providers"/>
</dbReference>
<dbReference type="DNASU" id="66904"/>
<dbReference type="Ensembl" id="ENSMUST00000035116.12">
    <property type="protein sequence ID" value="ENSMUSP00000035116.5"/>
    <property type="gene ID" value="ENSMUSG00000032527.14"/>
</dbReference>
<dbReference type="GeneID" id="66904"/>
<dbReference type="KEGG" id="mmu:66904"/>
<dbReference type="UCSC" id="uc009rfc.1">
    <property type="organism name" value="mouse"/>
</dbReference>
<dbReference type="AGR" id="MGI:1914154"/>
<dbReference type="CTD" id="5096"/>
<dbReference type="MGI" id="MGI:1914154">
    <property type="gene designation" value="Pccb"/>
</dbReference>
<dbReference type="VEuPathDB" id="HostDB:ENSMUSG00000032527"/>
<dbReference type="eggNOG" id="KOG0540">
    <property type="taxonomic scope" value="Eukaryota"/>
</dbReference>
<dbReference type="GeneTree" id="ENSGT00940000157741"/>
<dbReference type="HOGENOM" id="CLU_018822_6_0_1"/>
<dbReference type="InParanoid" id="Q99MN9"/>
<dbReference type="OMA" id="ENTSYMF"/>
<dbReference type="OrthoDB" id="439921at2759"/>
<dbReference type="PhylomeDB" id="Q99MN9"/>
<dbReference type="TreeFam" id="TF314350"/>
<dbReference type="BRENDA" id="6.4.1.3">
    <property type="organism ID" value="3474"/>
</dbReference>
<dbReference type="Reactome" id="R-MMU-196780">
    <property type="pathway name" value="Biotin transport and metabolism"/>
</dbReference>
<dbReference type="Reactome" id="R-MMU-71032">
    <property type="pathway name" value="Propionyl-CoA catabolism"/>
</dbReference>
<dbReference type="Reactome" id="R-MMU-9837999">
    <property type="pathway name" value="Mitochondrial protein degradation"/>
</dbReference>
<dbReference type="UniPathway" id="UPA00945">
    <property type="reaction ID" value="UER00908"/>
</dbReference>
<dbReference type="BioGRID-ORCS" id="66904">
    <property type="hits" value="1 hit in 79 CRISPR screens"/>
</dbReference>
<dbReference type="ChiTaRS" id="Pccb">
    <property type="organism name" value="mouse"/>
</dbReference>
<dbReference type="PRO" id="PR:Q99MN9"/>
<dbReference type="Proteomes" id="UP000000589">
    <property type="component" value="Chromosome 9"/>
</dbReference>
<dbReference type="RNAct" id="Q99MN9">
    <property type="molecule type" value="protein"/>
</dbReference>
<dbReference type="Bgee" id="ENSMUSG00000032527">
    <property type="expression patterns" value="Expressed in brown adipose tissue and 250 other cell types or tissues"/>
</dbReference>
<dbReference type="ExpressionAtlas" id="Q99MN9">
    <property type="expression patterns" value="baseline and differential"/>
</dbReference>
<dbReference type="GO" id="GO:1902494">
    <property type="term" value="C:catalytic complex"/>
    <property type="evidence" value="ECO:0007669"/>
    <property type="project" value="Ensembl"/>
</dbReference>
<dbReference type="GO" id="GO:0005759">
    <property type="term" value="C:mitochondrial matrix"/>
    <property type="evidence" value="ECO:0000250"/>
    <property type="project" value="UniProtKB"/>
</dbReference>
<dbReference type="GO" id="GO:0005739">
    <property type="term" value="C:mitochondrion"/>
    <property type="evidence" value="ECO:0007005"/>
    <property type="project" value="MGI"/>
</dbReference>
<dbReference type="GO" id="GO:0005524">
    <property type="term" value="F:ATP binding"/>
    <property type="evidence" value="ECO:0007669"/>
    <property type="project" value="UniProtKB-KW"/>
</dbReference>
<dbReference type="GO" id="GO:0004658">
    <property type="term" value="F:propionyl-CoA carboxylase activity"/>
    <property type="evidence" value="ECO:0000250"/>
    <property type="project" value="UniProtKB"/>
</dbReference>
<dbReference type="FunFam" id="3.90.226.10:FF:000017">
    <property type="entry name" value="Propionyl-CoA carboxylase subunit beta 5"/>
    <property type="match status" value="1"/>
</dbReference>
<dbReference type="FunFam" id="3.90.226.10:FF:000016">
    <property type="entry name" value="Propionyl-CoA carboxylase, beta subunit"/>
    <property type="match status" value="1"/>
</dbReference>
<dbReference type="Gene3D" id="3.90.226.10">
    <property type="entry name" value="2-enoyl-CoA Hydratase, Chain A, domain 1"/>
    <property type="match status" value="2"/>
</dbReference>
<dbReference type="InterPro" id="IPR051047">
    <property type="entry name" value="AccD/PCCB"/>
</dbReference>
<dbReference type="InterPro" id="IPR034733">
    <property type="entry name" value="AcCoA_carboxyl_beta"/>
</dbReference>
<dbReference type="InterPro" id="IPR029045">
    <property type="entry name" value="ClpP/crotonase-like_dom_sf"/>
</dbReference>
<dbReference type="InterPro" id="IPR011763">
    <property type="entry name" value="COA_CT_C"/>
</dbReference>
<dbReference type="InterPro" id="IPR011762">
    <property type="entry name" value="COA_CT_N"/>
</dbReference>
<dbReference type="PANTHER" id="PTHR43842">
    <property type="entry name" value="PROPIONYL-COA CARBOXYLASE BETA CHAIN"/>
    <property type="match status" value="1"/>
</dbReference>
<dbReference type="PANTHER" id="PTHR43842:SF2">
    <property type="entry name" value="PROPIONYL-COA CARBOXYLASE BETA CHAIN, MITOCHONDRIAL"/>
    <property type="match status" value="1"/>
</dbReference>
<dbReference type="Pfam" id="PF01039">
    <property type="entry name" value="Carboxyl_trans"/>
    <property type="match status" value="1"/>
</dbReference>
<dbReference type="SUPFAM" id="SSF52096">
    <property type="entry name" value="ClpP/crotonase"/>
    <property type="match status" value="2"/>
</dbReference>
<dbReference type="PROSITE" id="PS50989">
    <property type="entry name" value="COA_CT_CTER"/>
    <property type="match status" value="1"/>
</dbReference>
<dbReference type="PROSITE" id="PS50980">
    <property type="entry name" value="COA_CT_NTER"/>
    <property type="match status" value="1"/>
</dbReference>
<accession>Q99MN9</accession>
<accession>Q9DBG2</accession>
<gene>
    <name evidence="12" type="primary">Pccb</name>
</gene>
<proteinExistence type="evidence at protein level"/>
<organism>
    <name type="scientific">Mus musculus</name>
    <name type="common">Mouse</name>
    <dbReference type="NCBI Taxonomy" id="10090"/>
    <lineage>
        <taxon>Eukaryota</taxon>
        <taxon>Metazoa</taxon>
        <taxon>Chordata</taxon>
        <taxon>Craniata</taxon>
        <taxon>Vertebrata</taxon>
        <taxon>Euteleostomi</taxon>
        <taxon>Mammalia</taxon>
        <taxon>Eutheria</taxon>
        <taxon>Euarchontoglires</taxon>
        <taxon>Glires</taxon>
        <taxon>Rodentia</taxon>
        <taxon>Myomorpha</taxon>
        <taxon>Muroidea</taxon>
        <taxon>Muridae</taxon>
        <taxon>Murinae</taxon>
        <taxon>Mus</taxon>
        <taxon>Mus</taxon>
    </lineage>
</organism>
<feature type="transit peptide" description="Mitochondrion" evidence="1">
    <location>
        <begin position="1"/>
        <end position="28"/>
    </location>
</feature>
<feature type="chain" id="PRO_0000000294" description="Propionyl-CoA carboxylase beta chain, mitochondrial">
    <location>
        <begin position="29"/>
        <end position="541"/>
    </location>
</feature>
<feature type="domain" description="CoA carboxyltransferase N-terminal" evidence="6">
    <location>
        <begin position="34"/>
        <end position="292"/>
    </location>
</feature>
<feature type="domain" description="CoA carboxyltransferase C-terminal" evidence="7">
    <location>
        <begin position="296"/>
        <end position="535"/>
    </location>
</feature>
<feature type="region of interest" description="Carboxyltransferase" evidence="8">
    <location>
        <begin position="34"/>
        <end position="535"/>
    </location>
</feature>
<feature type="region of interest" description="Acyl-CoA binding" evidence="5">
    <location>
        <begin position="327"/>
        <end position="360"/>
    </location>
</feature>
<feature type="modified residue" description="Phosphoserine" evidence="2">
    <location>
        <position position="73"/>
    </location>
</feature>
<feature type="modified residue" description="N6-acetyllysine; alternate" evidence="13">
    <location>
        <position position="101"/>
    </location>
</feature>
<feature type="modified residue" description="N6-succinyllysine; alternate" evidence="14">
    <location>
        <position position="101"/>
    </location>
</feature>
<feature type="modified residue" description="N6-succinyllysine" evidence="14">
    <location>
        <position position="250"/>
    </location>
</feature>
<feature type="modified residue" description="N6-acetyllysine; alternate" evidence="13">
    <location>
        <position position="476"/>
    </location>
</feature>
<feature type="modified residue" description="N6-succinyllysine; alternate" evidence="14">
    <location>
        <position position="476"/>
    </location>
</feature>
<feature type="modified residue" description="N6-acetyllysine; alternate" evidence="13">
    <location>
        <position position="491"/>
    </location>
</feature>
<feature type="modified residue" description="N6-succinyllysine; alternate" evidence="14">
    <location>
        <position position="491"/>
    </location>
</feature>
<feature type="sequence conflict" description="In Ref. 1; AAK28525." evidence="10" ref="1">
    <original>K</original>
    <variation>L</variation>
    <location>
        <position position="340"/>
    </location>
</feature>
<keyword id="KW-0007">Acetylation</keyword>
<keyword id="KW-0067">ATP-binding</keyword>
<keyword id="KW-0436">Ligase</keyword>
<keyword id="KW-0496">Mitochondrion</keyword>
<keyword id="KW-0547">Nucleotide-binding</keyword>
<keyword id="KW-0597">Phosphoprotein</keyword>
<keyword id="KW-1185">Reference proteome</keyword>
<keyword id="KW-0809">Transit peptide</keyword>
<protein>
    <recommendedName>
        <fullName evidence="11">Propionyl-CoA carboxylase beta chain, mitochondrial</fullName>
        <shortName>PCCase subunit beta</shortName>
        <ecNumber evidence="2">6.4.1.3</ecNumber>
    </recommendedName>
    <alternativeName>
        <fullName>Propanoyl-CoA:carbon dioxide ligase subunit beta</fullName>
    </alternativeName>
</protein>
<comment type="function">
    <text evidence="2 3 4">This is one of the 2 subunits of the biotin-dependent propionyl-CoA carboxylase (PCC), a mitochondrial enzyme involved in the catabolism of odd chain fatty acids, branched-chain amino acids isoleucine, threonine, methionine, and valine and other metabolites. Propionyl-CoA carboxylase catalyzes the carboxylation of propionyl-CoA/propanoyl-CoA to D-methylmalonyl-CoA/(S)-methylmalonyl-CoA (By similarity). Within the holoenzyme, the alpha subunit catalyzes the ATP-dependent carboxylation of the biotin carried by the biotin carboxyl carrier (BCC) domain, while the beta subunit then transfers the carboxyl group from carboxylated biotin to propionyl-CoA (By similarity). Propionyl-CoA carboxylase also significantly acts on butyryl-CoA/butanoyl-CoA, which is converted to ethylmalonyl-CoA/(2S)-ethylmalonyl-CoA (By similarity). Other alternative minor substrates include (2E)-butenoyl-CoA/crotonoyl-CoA (By similarity).</text>
</comment>
<comment type="catalytic activity">
    <reaction evidence="2">
        <text>propanoyl-CoA + hydrogencarbonate + ATP = (S)-methylmalonyl-CoA + ADP + phosphate + H(+)</text>
        <dbReference type="Rhea" id="RHEA:23720"/>
        <dbReference type="ChEBI" id="CHEBI:15378"/>
        <dbReference type="ChEBI" id="CHEBI:17544"/>
        <dbReference type="ChEBI" id="CHEBI:30616"/>
        <dbReference type="ChEBI" id="CHEBI:43474"/>
        <dbReference type="ChEBI" id="CHEBI:57327"/>
        <dbReference type="ChEBI" id="CHEBI:57392"/>
        <dbReference type="ChEBI" id="CHEBI:456216"/>
        <dbReference type="EC" id="6.4.1.3"/>
    </reaction>
    <physiologicalReaction direction="left-to-right" evidence="2">
        <dbReference type="Rhea" id="RHEA:23721"/>
    </physiologicalReaction>
</comment>
<comment type="catalytic activity">
    <reaction evidence="3">
        <text>butanoyl-CoA + hydrogencarbonate + ATP = (2S)-ethylmalonyl-CoA + ADP + phosphate + H(+)</text>
        <dbReference type="Rhea" id="RHEA:59520"/>
        <dbReference type="ChEBI" id="CHEBI:15378"/>
        <dbReference type="ChEBI" id="CHEBI:17544"/>
        <dbReference type="ChEBI" id="CHEBI:30616"/>
        <dbReference type="ChEBI" id="CHEBI:43474"/>
        <dbReference type="ChEBI" id="CHEBI:57371"/>
        <dbReference type="ChEBI" id="CHEBI:60909"/>
        <dbReference type="ChEBI" id="CHEBI:456216"/>
    </reaction>
    <physiologicalReaction direction="left-to-right" evidence="3">
        <dbReference type="Rhea" id="RHEA:59521"/>
    </physiologicalReaction>
</comment>
<comment type="pathway">
    <text evidence="2">Metabolic intermediate metabolism; propanoyl-CoA degradation; succinyl-CoA from propanoyl-CoA: step 1/3.</text>
</comment>
<comment type="subunit">
    <text evidence="2">The holoenzyme is a dodecamer composed of 6 PCCA/alpha subunits and 6 PCCB/beta subunits.</text>
</comment>
<comment type="subcellular location">
    <subcellularLocation>
        <location evidence="2">Mitochondrion matrix</location>
    </subcellularLocation>
</comment>
<comment type="tissue specificity">
    <text evidence="9">Broadly expressed. Most abundantly expressed in the kidney, liver, small intestine and stomach.</text>
</comment>
<comment type="domain">
    <text evidence="4">The beta subunit contains the carboxyl transferase (CT) domain.</text>
</comment>
<comment type="similarity">
    <text evidence="10">Belongs to the AccD/PCCB family.</text>
</comment>
<name>PCCB_MOUSE</name>
<sequence>MAAAIRIRAVAAGARLSVLNCGLGITTRGLCSQPVSVKERIDNKRHAALLGGGQRRIDAQHKRGKLTARERISLLLDPGSFMESDMFVEHRCADFGMAADKNKFPGDSVVTGRGRINGRLVYVFSQDFTVFGGSLSGAHAQKICKIMDQAITVGAPVIGLNDSGGARIQEGVESLAGYADIFLRNVTASGVIPQISLIMGPCAGGAVYSPALTDFTFMVKDTSYLFITGPEVVKSVTNEDVTQEQLGGAKTHTTVSGVAHRAFDNDVDALCNLREFFNFLPLSSQDPAPIRECHDPSDRLVPELDTVVPLESSKAYNMLDIIHAVIDEREFFEIMPSYAKNIVVGFARMNGRTVGIVGNQPNVASGCLDINSSVKGARFVRFCDAFNIPLITFVDVPGFLPGTAQEYGGIIRHGAKLLYAFAEATVPKITVITRKAYGGAYDVMSSKHLLGDTNYAWPTAEIAVMGAKGAVEIIFKGHQDVEAAQAEYVEKFANPFPAAVRGFVDDIIQPSSTRARICCDLEVLASKKVHRPWRKHANIPL</sequence>
<evidence type="ECO:0000250" key="1"/>
<evidence type="ECO:0000250" key="2">
    <source>
        <dbReference type="UniProtKB" id="P05166"/>
    </source>
</evidence>
<evidence type="ECO:0000250" key="3">
    <source>
        <dbReference type="UniProtKB" id="P79384"/>
    </source>
</evidence>
<evidence type="ECO:0000250" key="4">
    <source>
        <dbReference type="UniProtKB" id="Q168G2"/>
    </source>
</evidence>
<evidence type="ECO:0000255" key="5"/>
<evidence type="ECO:0000255" key="6">
    <source>
        <dbReference type="PROSITE-ProRule" id="PRU01136"/>
    </source>
</evidence>
<evidence type="ECO:0000255" key="7">
    <source>
        <dbReference type="PROSITE-ProRule" id="PRU01137"/>
    </source>
</evidence>
<evidence type="ECO:0000255" key="8">
    <source>
        <dbReference type="PROSITE-ProRule" id="PRU01138"/>
    </source>
</evidence>
<evidence type="ECO:0000269" key="9">
    <source>
    </source>
</evidence>
<evidence type="ECO:0000305" key="10"/>
<evidence type="ECO:0000305" key="11">
    <source>
    </source>
</evidence>
<evidence type="ECO:0000312" key="12">
    <source>
        <dbReference type="MGI" id="MGI:1914154"/>
    </source>
</evidence>
<evidence type="ECO:0007744" key="13">
    <source>
    </source>
</evidence>
<evidence type="ECO:0007744" key="14">
    <source>
    </source>
</evidence>
<reference key="1">
    <citation type="journal article" date="2001" name="Gene">
        <title>cDNA cloning, mapping and expression of the mouse propionyl CoA carboxylase beta (pccb), the gene for human type II propionic acidaemia.</title>
        <authorList>
            <person name="Schrick J.J."/>
            <person name="Lingrel J.B."/>
        </authorList>
    </citation>
    <scope>NUCLEOTIDE SEQUENCE [MRNA]</scope>
    <scope>TISSUE SPECIFICITY</scope>
    <source>
        <strain>C57BL/6J</strain>
        <tissue>Kidney</tissue>
    </source>
</reference>
<reference key="2">
    <citation type="journal article" date="2005" name="Science">
        <title>The transcriptional landscape of the mammalian genome.</title>
        <authorList>
            <person name="Carninci P."/>
            <person name="Kasukawa T."/>
            <person name="Katayama S."/>
            <person name="Gough J."/>
            <person name="Frith M.C."/>
            <person name="Maeda N."/>
            <person name="Oyama R."/>
            <person name="Ravasi T."/>
            <person name="Lenhard B."/>
            <person name="Wells C."/>
            <person name="Kodzius R."/>
            <person name="Shimokawa K."/>
            <person name="Bajic V.B."/>
            <person name="Brenner S.E."/>
            <person name="Batalov S."/>
            <person name="Forrest A.R."/>
            <person name="Zavolan M."/>
            <person name="Davis M.J."/>
            <person name="Wilming L.G."/>
            <person name="Aidinis V."/>
            <person name="Allen J.E."/>
            <person name="Ambesi-Impiombato A."/>
            <person name="Apweiler R."/>
            <person name="Aturaliya R.N."/>
            <person name="Bailey T.L."/>
            <person name="Bansal M."/>
            <person name="Baxter L."/>
            <person name="Beisel K.W."/>
            <person name="Bersano T."/>
            <person name="Bono H."/>
            <person name="Chalk A.M."/>
            <person name="Chiu K.P."/>
            <person name="Choudhary V."/>
            <person name="Christoffels A."/>
            <person name="Clutterbuck D.R."/>
            <person name="Crowe M.L."/>
            <person name="Dalla E."/>
            <person name="Dalrymple B.P."/>
            <person name="de Bono B."/>
            <person name="Della Gatta G."/>
            <person name="di Bernardo D."/>
            <person name="Down T."/>
            <person name="Engstrom P."/>
            <person name="Fagiolini M."/>
            <person name="Faulkner G."/>
            <person name="Fletcher C.F."/>
            <person name="Fukushima T."/>
            <person name="Furuno M."/>
            <person name="Futaki S."/>
            <person name="Gariboldi M."/>
            <person name="Georgii-Hemming P."/>
            <person name="Gingeras T.R."/>
            <person name="Gojobori T."/>
            <person name="Green R.E."/>
            <person name="Gustincich S."/>
            <person name="Harbers M."/>
            <person name="Hayashi Y."/>
            <person name="Hensch T.K."/>
            <person name="Hirokawa N."/>
            <person name="Hill D."/>
            <person name="Huminiecki L."/>
            <person name="Iacono M."/>
            <person name="Ikeo K."/>
            <person name="Iwama A."/>
            <person name="Ishikawa T."/>
            <person name="Jakt M."/>
            <person name="Kanapin A."/>
            <person name="Katoh M."/>
            <person name="Kawasawa Y."/>
            <person name="Kelso J."/>
            <person name="Kitamura H."/>
            <person name="Kitano H."/>
            <person name="Kollias G."/>
            <person name="Krishnan S.P."/>
            <person name="Kruger A."/>
            <person name="Kummerfeld S.K."/>
            <person name="Kurochkin I.V."/>
            <person name="Lareau L.F."/>
            <person name="Lazarevic D."/>
            <person name="Lipovich L."/>
            <person name="Liu J."/>
            <person name="Liuni S."/>
            <person name="McWilliam S."/>
            <person name="Madan Babu M."/>
            <person name="Madera M."/>
            <person name="Marchionni L."/>
            <person name="Matsuda H."/>
            <person name="Matsuzawa S."/>
            <person name="Miki H."/>
            <person name="Mignone F."/>
            <person name="Miyake S."/>
            <person name="Morris K."/>
            <person name="Mottagui-Tabar S."/>
            <person name="Mulder N."/>
            <person name="Nakano N."/>
            <person name="Nakauchi H."/>
            <person name="Ng P."/>
            <person name="Nilsson R."/>
            <person name="Nishiguchi S."/>
            <person name="Nishikawa S."/>
            <person name="Nori F."/>
            <person name="Ohara O."/>
            <person name="Okazaki Y."/>
            <person name="Orlando V."/>
            <person name="Pang K.C."/>
            <person name="Pavan W.J."/>
            <person name="Pavesi G."/>
            <person name="Pesole G."/>
            <person name="Petrovsky N."/>
            <person name="Piazza S."/>
            <person name="Reed J."/>
            <person name="Reid J.F."/>
            <person name="Ring B.Z."/>
            <person name="Ringwald M."/>
            <person name="Rost B."/>
            <person name="Ruan Y."/>
            <person name="Salzberg S.L."/>
            <person name="Sandelin A."/>
            <person name="Schneider C."/>
            <person name="Schoenbach C."/>
            <person name="Sekiguchi K."/>
            <person name="Semple C.A."/>
            <person name="Seno S."/>
            <person name="Sessa L."/>
            <person name="Sheng Y."/>
            <person name="Shibata Y."/>
            <person name="Shimada H."/>
            <person name="Shimada K."/>
            <person name="Silva D."/>
            <person name="Sinclair B."/>
            <person name="Sperling S."/>
            <person name="Stupka E."/>
            <person name="Sugiura K."/>
            <person name="Sultana R."/>
            <person name="Takenaka Y."/>
            <person name="Taki K."/>
            <person name="Tammoja K."/>
            <person name="Tan S.L."/>
            <person name="Tang S."/>
            <person name="Taylor M.S."/>
            <person name="Tegner J."/>
            <person name="Teichmann S.A."/>
            <person name="Ueda H.R."/>
            <person name="van Nimwegen E."/>
            <person name="Verardo R."/>
            <person name="Wei C.L."/>
            <person name="Yagi K."/>
            <person name="Yamanishi H."/>
            <person name="Zabarovsky E."/>
            <person name="Zhu S."/>
            <person name="Zimmer A."/>
            <person name="Hide W."/>
            <person name="Bult C."/>
            <person name="Grimmond S.M."/>
            <person name="Teasdale R.D."/>
            <person name="Liu E.T."/>
            <person name="Brusic V."/>
            <person name="Quackenbush J."/>
            <person name="Wahlestedt C."/>
            <person name="Mattick J.S."/>
            <person name="Hume D.A."/>
            <person name="Kai C."/>
            <person name="Sasaki D."/>
            <person name="Tomaru Y."/>
            <person name="Fukuda S."/>
            <person name="Kanamori-Katayama M."/>
            <person name="Suzuki M."/>
            <person name="Aoki J."/>
            <person name="Arakawa T."/>
            <person name="Iida J."/>
            <person name="Imamura K."/>
            <person name="Itoh M."/>
            <person name="Kato T."/>
            <person name="Kawaji H."/>
            <person name="Kawagashira N."/>
            <person name="Kawashima T."/>
            <person name="Kojima M."/>
            <person name="Kondo S."/>
            <person name="Konno H."/>
            <person name="Nakano K."/>
            <person name="Ninomiya N."/>
            <person name="Nishio T."/>
            <person name="Okada M."/>
            <person name="Plessy C."/>
            <person name="Shibata K."/>
            <person name="Shiraki T."/>
            <person name="Suzuki S."/>
            <person name="Tagami M."/>
            <person name="Waki K."/>
            <person name="Watahiki A."/>
            <person name="Okamura-Oho Y."/>
            <person name="Suzuki H."/>
            <person name="Kawai J."/>
            <person name="Hayashizaki Y."/>
        </authorList>
    </citation>
    <scope>NUCLEOTIDE SEQUENCE [LARGE SCALE MRNA]</scope>
    <source>
        <strain>C57BL/6J</strain>
        <tissue>Liver</tissue>
    </source>
</reference>
<reference key="3">
    <citation type="journal article" date="2010" name="Cell">
        <title>A tissue-specific atlas of mouse protein phosphorylation and expression.</title>
        <authorList>
            <person name="Huttlin E.L."/>
            <person name="Jedrychowski M.P."/>
            <person name="Elias J.E."/>
            <person name="Goswami T."/>
            <person name="Rad R."/>
            <person name="Beausoleil S.A."/>
            <person name="Villen J."/>
            <person name="Haas W."/>
            <person name="Sowa M.E."/>
            <person name="Gygi S.P."/>
        </authorList>
    </citation>
    <scope>IDENTIFICATION BY MASS SPECTROMETRY [LARGE SCALE ANALYSIS]</scope>
    <source>
        <tissue>Brain</tissue>
        <tissue>Brown adipose tissue</tissue>
        <tissue>Heart</tissue>
        <tissue>Kidney</tissue>
        <tissue>Liver</tissue>
        <tissue>Lung</tissue>
        <tissue>Pancreas</tissue>
        <tissue>Spleen</tissue>
        <tissue>Testis</tissue>
    </source>
</reference>
<reference key="4">
    <citation type="journal article" date="2013" name="Mol. Cell">
        <title>SIRT5-mediated lysine desuccinylation impacts diverse metabolic pathways.</title>
        <authorList>
            <person name="Park J."/>
            <person name="Chen Y."/>
            <person name="Tishkoff D.X."/>
            <person name="Peng C."/>
            <person name="Tan M."/>
            <person name="Dai L."/>
            <person name="Xie Z."/>
            <person name="Zhang Y."/>
            <person name="Zwaans B.M."/>
            <person name="Skinner M.E."/>
            <person name="Lombard D.B."/>
            <person name="Zhao Y."/>
        </authorList>
    </citation>
    <scope>SUCCINYLATION [LARGE SCALE ANALYSIS] AT LYS-101; LYS-250; LYS-476 AND LYS-491</scope>
    <scope>IDENTIFICATION BY MASS SPECTROMETRY [LARGE SCALE ANALYSIS]</scope>
    <source>
        <tissue>Liver</tissue>
    </source>
</reference>
<reference key="5">
    <citation type="journal article" date="2013" name="Proc. Natl. Acad. Sci. U.S.A.">
        <title>Label-free quantitative proteomics of the lysine acetylome in mitochondria identifies substrates of SIRT3 in metabolic pathways.</title>
        <authorList>
            <person name="Rardin M.J."/>
            <person name="Newman J.C."/>
            <person name="Held J.M."/>
            <person name="Cusack M.P."/>
            <person name="Sorensen D.J."/>
            <person name="Li B."/>
            <person name="Schilling B."/>
            <person name="Mooney S.D."/>
            <person name="Kahn C.R."/>
            <person name="Verdin E."/>
            <person name="Gibson B.W."/>
        </authorList>
    </citation>
    <scope>ACETYLATION [LARGE SCALE ANALYSIS] AT LYS-101; LYS-476 AND LYS-491</scope>
    <scope>IDENTIFICATION BY MASS SPECTROMETRY [LARGE SCALE ANALYSIS]</scope>
    <source>
        <tissue>Liver</tissue>
    </source>
</reference>